<gene>
    <name type="ORF">DDB_G0271326</name>
</gene>
<name>CSBL1_DICDI</name>
<evidence type="ECO:0000305" key="1"/>
<protein>
    <recommendedName>
        <fullName>Uncharacterized protein csb family protein DDB_G0271326</fullName>
    </recommendedName>
</protein>
<dbReference type="EMBL" id="AAFI02000006">
    <property type="protein sequence ID" value="EAL71793.1"/>
    <property type="status" value="ALT_SEQ"/>
    <property type="molecule type" value="Genomic_DNA"/>
</dbReference>
<dbReference type="RefSeq" id="XP_645645.1">
    <property type="nucleotide sequence ID" value="XM_640553.1"/>
</dbReference>
<dbReference type="PaxDb" id="44689-DDB0202865"/>
<dbReference type="EnsemblProtists" id="EAL71793">
    <property type="protein sequence ID" value="EAL71793"/>
    <property type="gene ID" value="DDB_G0271326"/>
</dbReference>
<dbReference type="GeneID" id="8617837"/>
<dbReference type="KEGG" id="ddi:DDB_G0271326"/>
<dbReference type="dictyBase" id="DDB_G0271326"/>
<dbReference type="VEuPathDB" id="AmoebaDB:DDB_G0271326"/>
<dbReference type="InParanoid" id="Q55BG7"/>
<dbReference type="PRO" id="PR:Q55BG7"/>
<dbReference type="Proteomes" id="UP000002195">
    <property type="component" value="Chromosome 2"/>
</dbReference>
<dbReference type="GO" id="GO:0007155">
    <property type="term" value="P:cell adhesion"/>
    <property type="evidence" value="ECO:0007669"/>
    <property type="project" value="InterPro"/>
</dbReference>
<dbReference type="InterPro" id="IPR008601">
    <property type="entry name" value="Dicty_CAD"/>
</dbReference>
<dbReference type="Pfam" id="PF05720">
    <property type="entry name" value="Dicty_CAD"/>
    <property type="match status" value="1"/>
</dbReference>
<proteinExistence type="inferred from homology"/>
<sequence>MTEEVHKLKITIFTDKGRSTISGGDFPLPVLPYPAPYTFRLFDYEIEGPNLTNKEFKVKTGKIEYKGEEFDIPSSSKGSWRGVDEEMDLIYVTIYPSRQPKKVFHY</sequence>
<comment type="similarity">
    <text evidence="1">Belongs to the csb family.</text>
</comment>
<comment type="sequence caution" evidence="1">
    <conflict type="erroneous gene model prediction">
        <sequence resource="EMBL-CDS" id="EAL71793"/>
    </conflict>
</comment>
<reference key="1">
    <citation type="journal article" date="2002" name="Nature">
        <title>Sequence and analysis of chromosome 2 of Dictyostelium discoideum.</title>
        <authorList>
            <person name="Gloeckner G."/>
            <person name="Eichinger L."/>
            <person name="Szafranski K."/>
            <person name="Pachebat J.A."/>
            <person name="Bankier A.T."/>
            <person name="Dear P.H."/>
            <person name="Lehmann R."/>
            <person name="Baumgart C."/>
            <person name="Parra G."/>
            <person name="Abril J.F."/>
            <person name="Guigo R."/>
            <person name="Kumpf K."/>
            <person name="Tunggal B."/>
            <person name="Cox E.C."/>
            <person name="Quail M.A."/>
            <person name="Platzer M."/>
            <person name="Rosenthal A."/>
            <person name="Noegel A.A."/>
        </authorList>
    </citation>
    <scope>NUCLEOTIDE SEQUENCE [LARGE SCALE GENOMIC DNA]</scope>
    <source>
        <strain>AX4</strain>
    </source>
</reference>
<reference key="2">
    <citation type="journal article" date="2005" name="Nature">
        <title>The genome of the social amoeba Dictyostelium discoideum.</title>
        <authorList>
            <person name="Eichinger L."/>
            <person name="Pachebat J.A."/>
            <person name="Gloeckner G."/>
            <person name="Rajandream M.A."/>
            <person name="Sucgang R."/>
            <person name="Berriman M."/>
            <person name="Song J."/>
            <person name="Olsen R."/>
            <person name="Szafranski K."/>
            <person name="Xu Q."/>
            <person name="Tunggal B."/>
            <person name="Kummerfeld S."/>
            <person name="Madera M."/>
            <person name="Konfortov B.A."/>
            <person name="Rivero F."/>
            <person name="Bankier A.T."/>
            <person name="Lehmann R."/>
            <person name="Hamlin N."/>
            <person name="Davies R."/>
            <person name="Gaudet P."/>
            <person name="Fey P."/>
            <person name="Pilcher K."/>
            <person name="Chen G."/>
            <person name="Saunders D."/>
            <person name="Sodergren E.J."/>
            <person name="Davis P."/>
            <person name="Kerhornou A."/>
            <person name="Nie X."/>
            <person name="Hall N."/>
            <person name="Anjard C."/>
            <person name="Hemphill L."/>
            <person name="Bason N."/>
            <person name="Farbrother P."/>
            <person name="Desany B."/>
            <person name="Just E."/>
            <person name="Morio T."/>
            <person name="Rost R."/>
            <person name="Churcher C.M."/>
            <person name="Cooper J."/>
            <person name="Haydock S."/>
            <person name="van Driessche N."/>
            <person name="Cronin A."/>
            <person name="Goodhead I."/>
            <person name="Muzny D.M."/>
            <person name="Mourier T."/>
            <person name="Pain A."/>
            <person name="Lu M."/>
            <person name="Harper D."/>
            <person name="Lindsay R."/>
            <person name="Hauser H."/>
            <person name="James K.D."/>
            <person name="Quiles M."/>
            <person name="Madan Babu M."/>
            <person name="Saito T."/>
            <person name="Buchrieser C."/>
            <person name="Wardroper A."/>
            <person name="Felder M."/>
            <person name="Thangavelu M."/>
            <person name="Johnson D."/>
            <person name="Knights A."/>
            <person name="Loulseged H."/>
            <person name="Mungall K.L."/>
            <person name="Oliver K."/>
            <person name="Price C."/>
            <person name="Quail M.A."/>
            <person name="Urushihara H."/>
            <person name="Hernandez J."/>
            <person name="Rabbinowitsch E."/>
            <person name="Steffen D."/>
            <person name="Sanders M."/>
            <person name="Ma J."/>
            <person name="Kohara Y."/>
            <person name="Sharp S."/>
            <person name="Simmonds M.N."/>
            <person name="Spiegler S."/>
            <person name="Tivey A."/>
            <person name="Sugano S."/>
            <person name="White B."/>
            <person name="Walker D."/>
            <person name="Woodward J.R."/>
            <person name="Winckler T."/>
            <person name="Tanaka Y."/>
            <person name="Shaulsky G."/>
            <person name="Schleicher M."/>
            <person name="Weinstock G.M."/>
            <person name="Rosenthal A."/>
            <person name="Cox E.C."/>
            <person name="Chisholm R.L."/>
            <person name="Gibbs R.A."/>
            <person name="Loomis W.F."/>
            <person name="Platzer M."/>
            <person name="Kay R.R."/>
            <person name="Williams J.G."/>
            <person name="Dear P.H."/>
            <person name="Noegel A.A."/>
            <person name="Barrell B.G."/>
            <person name="Kuspa A."/>
        </authorList>
    </citation>
    <scope>NUCLEOTIDE SEQUENCE [LARGE SCALE GENOMIC DNA]</scope>
    <source>
        <strain>AX4</strain>
    </source>
</reference>
<accession>Q55BG7</accession>
<organism>
    <name type="scientific">Dictyostelium discoideum</name>
    <name type="common">Social amoeba</name>
    <dbReference type="NCBI Taxonomy" id="44689"/>
    <lineage>
        <taxon>Eukaryota</taxon>
        <taxon>Amoebozoa</taxon>
        <taxon>Evosea</taxon>
        <taxon>Eumycetozoa</taxon>
        <taxon>Dictyostelia</taxon>
        <taxon>Dictyosteliales</taxon>
        <taxon>Dictyosteliaceae</taxon>
        <taxon>Dictyostelium</taxon>
    </lineage>
</organism>
<keyword id="KW-1185">Reference proteome</keyword>
<feature type="chain" id="PRO_0000312409" description="Uncharacterized protein csb family protein DDB_G0271326">
    <location>
        <begin position="1"/>
        <end position="106"/>
    </location>
</feature>